<comment type="function">
    <text evidence="1">Catalyzes the radical-mediated insertion of two sulfur atoms into the C-6 and C-8 positions of the octanoyl moiety bound to the lipoyl domains of lipoate-dependent enzymes, thereby converting the octanoylated domains into lipoylated derivatives.</text>
</comment>
<comment type="catalytic activity">
    <reaction evidence="1">
        <text>[[Fe-S] cluster scaffold protein carrying a second [4Fe-4S](2+) cluster] + N(6)-octanoyl-L-lysyl-[protein] + 2 oxidized [2Fe-2S]-[ferredoxin] + 2 S-adenosyl-L-methionine + 4 H(+) = [[Fe-S] cluster scaffold protein] + N(6)-[(R)-dihydrolipoyl]-L-lysyl-[protein] + 4 Fe(3+) + 2 hydrogen sulfide + 2 5'-deoxyadenosine + 2 L-methionine + 2 reduced [2Fe-2S]-[ferredoxin]</text>
        <dbReference type="Rhea" id="RHEA:16585"/>
        <dbReference type="Rhea" id="RHEA-COMP:9928"/>
        <dbReference type="Rhea" id="RHEA-COMP:10000"/>
        <dbReference type="Rhea" id="RHEA-COMP:10001"/>
        <dbReference type="Rhea" id="RHEA-COMP:10475"/>
        <dbReference type="Rhea" id="RHEA-COMP:14568"/>
        <dbReference type="Rhea" id="RHEA-COMP:14569"/>
        <dbReference type="ChEBI" id="CHEBI:15378"/>
        <dbReference type="ChEBI" id="CHEBI:17319"/>
        <dbReference type="ChEBI" id="CHEBI:29034"/>
        <dbReference type="ChEBI" id="CHEBI:29919"/>
        <dbReference type="ChEBI" id="CHEBI:33722"/>
        <dbReference type="ChEBI" id="CHEBI:33737"/>
        <dbReference type="ChEBI" id="CHEBI:33738"/>
        <dbReference type="ChEBI" id="CHEBI:57844"/>
        <dbReference type="ChEBI" id="CHEBI:59789"/>
        <dbReference type="ChEBI" id="CHEBI:78809"/>
        <dbReference type="ChEBI" id="CHEBI:83100"/>
        <dbReference type="EC" id="2.8.1.8"/>
    </reaction>
</comment>
<comment type="cofactor">
    <cofactor evidence="1">
        <name>[4Fe-4S] cluster</name>
        <dbReference type="ChEBI" id="CHEBI:49883"/>
    </cofactor>
    <text evidence="1">Binds 2 [4Fe-4S] clusters per subunit. One cluster is coordinated with 3 cysteines and an exchangeable S-adenosyl-L-methionine.</text>
</comment>
<comment type="pathway">
    <text evidence="1">Protein modification; protein lipoylation via endogenous pathway; protein N(6)-(lipoyl)lysine from octanoyl-[acyl-carrier-protein]: step 2/2.</text>
</comment>
<comment type="subcellular location">
    <subcellularLocation>
        <location>Plastid</location>
        <location>Chloroplast</location>
    </subcellularLocation>
</comment>
<comment type="miscellaneous">
    <text evidence="1">This protein may be expected to contain an N-terminal transit peptide but none has been predicted.</text>
</comment>
<comment type="similarity">
    <text evidence="1">Belongs to the radical SAM superfamily. Lipoyl synthase family.</text>
</comment>
<accession>C0PN26</accession>
<feature type="chain" id="PRO_0000398861" description="Lipoyl synthase 2, chloroplastic">
    <location>
        <begin position="1"/>
        <end position="367"/>
    </location>
</feature>
<feature type="domain" description="Radical SAM core" evidence="2">
    <location>
        <begin position="104"/>
        <end position="325"/>
    </location>
</feature>
<feature type="binding site" evidence="1">
    <location>
        <position position="84"/>
    </location>
    <ligand>
        <name>[4Fe-4S] cluster</name>
        <dbReference type="ChEBI" id="CHEBI:49883"/>
        <label>1</label>
    </ligand>
</feature>
<feature type="binding site" evidence="1">
    <location>
        <position position="89"/>
    </location>
    <ligand>
        <name>[4Fe-4S] cluster</name>
        <dbReference type="ChEBI" id="CHEBI:49883"/>
        <label>1</label>
    </ligand>
</feature>
<feature type="binding site" evidence="1">
    <location>
        <position position="95"/>
    </location>
    <ligand>
        <name>[4Fe-4S] cluster</name>
        <dbReference type="ChEBI" id="CHEBI:49883"/>
        <label>1</label>
    </ligand>
</feature>
<feature type="binding site" evidence="1">
    <location>
        <position position="121"/>
    </location>
    <ligand>
        <name>[4Fe-4S] cluster</name>
        <dbReference type="ChEBI" id="CHEBI:49883"/>
        <label>2</label>
        <note>4Fe-4S-S-AdoMet</note>
    </ligand>
</feature>
<feature type="binding site" evidence="1">
    <location>
        <position position="125"/>
    </location>
    <ligand>
        <name>[4Fe-4S] cluster</name>
        <dbReference type="ChEBI" id="CHEBI:49883"/>
        <label>2</label>
        <note>4Fe-4S-S-AdoMet</note>
    </ligand>
</feature>
<feature type="binding site" evidence="1">
    <location>
        <position position="128"/>
    </location>
    <ligand>
        <name>[4Fe-4S] cluster</name>
        <dbReference type="ChEBI" id="CHEBI:49883"/>
        <label>2</label>
        <note>4Fe-4S-S-AdoMet</note>
    </ligand>
</feature>
<feature type="binding site" evidence="1">
    <location>
        <position position="336"/>
    </location>
    <ligand>
        <name>[4Fe-4S] cluster</name>
        <dbReference type="ChEBI" id="CHEBI:49883"/>
        <label>1</label>
    </ligand>
</feature>
<proteinExistence type="evidence at transcript level"/>
<sequence>MQSSLARPPVLAGCGERRGLAAVARCRAEAAAPVWTASRASAGPYTGRDPEVKKPAWLRQRAAQGEKYARLRESIGELKLNTVCVEAQCPNIGECWNGGGGAGGEGDGIATATIMVLGDTCTRGCRFCAVKTSNKPPPPDPLEPLNTALAVASWGVDYVVLTSVDRDDLPDGGSSHFAQTVKALKELKPGILVECLTSDFRGDLEAISSLANSGLDVYAHNIETVRSLQRVVRDPRAGYDQSLAVLKHAKGSREDMITKSSIMLGLGETDEEVKQAMMDLRAIGVDILTLGQYLQPSERHLTVREYVTPQKFQFWKEYGESVGFRYVASGPLVRSSYRAGELFIQNLVRNNKTESSMDPYAEITKSN</sequence>
<reference key="1">
    <citation type="journal article" date="2009" name="PLoS Genet.">
        <title>Sequencing, mapping, and analysis of 27,455 maize full-length cDNAs.</title>
        <authorList>
            <person name="Soderlund C."/>
            <person name="Descour A."/>
            <person name="Kudrna D."/>
            <person name="Bomhoff M."/>
            <person name="Boyd L."/>
            <person name="Currie J."/>
            <person name="Angelova A."/>
            <person name="Collura K."/>
            <person name="Wissotski M."/>
            <person name="Ashley E."/>
            <person name="Morrow D."/>
            <person name="Fernandes J."/>
            <person name="Walbot V."/>
            <person name="Yu Y."/>
        </authorList>
    </citation>
    <scope>NUCLEOTIDE SEQUENCE [LARGE SCALE MRNA]</scope>
    <source>
        <strain>B73</strain>
    </source>
</reference>
<evidence type="ECO:0000255" key="1">
    <source>
        <dbReference type="HAMAP-Rule" id="MF_03129"/>
    </source>
</evidence>
<evidence type="ECO:0000255" key="2">
    <source>
        <dbReference type="PROSITE-ProRule" id="PRU01266"/>
    </source>
</evidence>
<keyword id="KW-0004">4Fe-4S</keyword>
<keyword id="KW-0150">Chloroplast</keyword>
<keyword id="KW-0408">Iron</keyword>
<keyword id="KW-0411">Iron-sulfur</keyword>
<keyword id="KW-0479">Metal-binding</keyword>
<keyword id="KW-0934">Plastid</keyword>
<keyword id="KW-1185">Reference proteome</keyword>
<keyword id="KW-0949">S-adenosyl-L-methionine</keyword>
<keyword id="KW-0808">Transferase</keyword>
<protein>
    <recommendedName>
        <fullName>Lipoyl synthase 2, chloroplastic</fullName>
        <ecNumber evidence="1">2.8.1.8</ecNumber>
    </recommendedName>
    <alternativeName>
        <fullName evidence="1">Lipoate synthase 2</fullName>
        <shortName evidence="1">LS 2</shortName>
        <shortName evidence="1">Lip-syn 2</shortName>
    </alternativeName>
    <alternativeName>
        <fullName evidence="1">Lipoate synthase, plastidial 2</fullName>
        <shortName evidence="1">LIP1p 2</shortName>
    </alternativeName>
    <alternativeName>
        <fullName evidence="1">Lipoic acid synthase 2</fullName>
    </alternativeName>
</protein>
<name>LISC2_MAIZE</name>
<dbReference type="EC" id="2.8.1.8" evidence="1"/>
<dbReference type="EMBL" id="BT069695">
    <property type="protein sequence ID" value="ACN36592.1"/>
    <property type="molecule type" value="mRNA"/>
</dbReference>
<dbReference type="RefSeq" id="NP_001170321.1">
    <property type="nucleotide sequence ID" value="NM_001176850.1"/>
</dbReference>
<dbReference type="SMR" id="C0PN26"/>
<dbReference type="FunCoup" id="C0PN26">
    <property type="interactions" value="1408"/>
</dbReference>
<dbReference type="STRING" id="4577.C0PN26"/>
<dbReference type="PaxDb" id="4577-GRMZM2G101698_P02"/>
<dbReference type="GeneID" id="100384288"/>
<dbReference type="KEGG" id="zma:100384288"/>
<dbReference type="eggNOG" id="KOG2672">
    <property type="taxonomic scope" value="Eukaryota"/>
</dbReference>
<dbReference type="HOGENOM" id="CLU_033144_2_0_1"/>
<dbReference type="InParanoid" id="C0PN26"/>
<dbReference type="OrthoDB" id="3231at2759"/>
<dbReference type="UniPathway" id="UPA00538">
    <property type="reaction ID" value="UER00593"/>
</dbReference>
<dbReference type="Proteomes" id="UP000007305">
    <property type="component" value="Unplaced"/>
</dbReference>
<dbReference type="ExpressionAtlas" id="C0PN26">
    <property type="expression patterns" value="baseline and differential"/>
</dbReference>
<dbReference type="GO" id="GO:0009507">
    <property type="term" value="C:chloroplast"/>
    <property type="evidence" value="ECO:0007669"/>
    <property type="project" value="UniProtKB-SubCell"/>
</dbReference>
<dbReference type="GO" id="GO:0005739">
    <property type="term" value="C:mitochondrion"/>
    <property type="evidence" value="ECO:0000318"/>
    <property type="project" value="GO_Central"/>
</dbReference>
<dbReference type="GO" id="GO:0051539">
    <property type="term" value="F:4 iron, 4 sulfur cluster binding"/>
    <property type="evidence" value="ECO:0007669"/>
    <property type="project" value="UniProtKB-UniRule"/>
</dbReference>
<dbReference type="GO" id="GO:0016992">
    <property type="term" value="F:lipoate synthase activity"/>
    <property type="evidence" value="ECO:0000318"/>
    <property type="project" value="GO_Central"/>
</dbReference>
<dbReference type="GO" id="GO:0046872">
    <property type="term" value="F:metal ion binding"/>
    <property type="evidence" value="ECO:0007669"/>
    <property type="project" value="UniProtKB-KW"/>
</dbReference>
<dbReference type="GO" id="GO:0009107">
    <property type="term" value="P:lipoate biosynthetic process"/>
    <property type="evidence" value="ECO:0000318"/>
    <property type="project" value="GO_Central"/>
</dbReference>
<dbReference type="CDD" id="cd01335">
    <property type="entry name" value="Radical_SAM"/>
    <property type="match status" value="1"/>
</dbReference>
<dbReference type="FunFam" id="3.20.20.70:FF:000036">
    <property type="entry name" value="Lipoyl synthase, mitochondrial"/>
    <property type="match status" value="1"/>
</dbReference>
<dbReference type="Gene3D" id="3.20.20.70">
    <property type="entry name" value="Aldolase class I"/>
    <property type="match status" value="1"/>
</dbReference>
<dbReference type="HAMAP" id="MF_00206">
    <property type="entry name" value="Lipoyl_synth"/>
    <property type="match status" value="1"/>
</dbReference>
<dbReference type="HAMAP" id="MF_03129">
    <property type="entry name" value="Lipoyl_synth_plantC"/>
    <property type="match status" value="1"/>
</dbReference>
<dbReference type="InterPro" id="IPR013785">
    <property type="entry name" value="Aldolase_TIM"/>
</dbReference>
<dbReference type="InterPro" id="IPR006638">
    <property type="entry name" value="Elp3/MiaA/NifB-like_rSAM"/>
</dbReference>
<dbReference type="InterPro" id="IPR003698">
    <property type="entry name" value="Lipoyl_synth"/>
</dbReference>
<dbReference type="InterPro" id="IPR027526">
    <property type="entry name" value="Lipoyl_synth_chlpt"/>
</dbReference>
<dbReference type="InterPro" id="IPR007197">
    <property type="entry name" value="rSAM"/>
</dbReference>
<dbReference type="NCBIfam" id="TIGR00510">
    <property type="entry name" value="lipA"/>
    <property type="match status" value="1"/>
</dbReference>
<dbReference type="NCBIfam" id="NF004019">
    <property type="entry name" value="PRK05481.1"/>
    <property type="match status" value="1"/>
</dbReference>
<dbReference type="NCBIfam" id="NF009544">
    <property type="entry name" value="PRK12928.1"/>
    <property type="match status" value="1"/>
</dbReference>
<dbReference type="PANTHER" id="PTHR10949">
    <property type="entry name" value="LIPOYL SYNTHASE"/>
    <property type="match status" value="1"/>
</dbReference>
<dbReference type="PANTHER" id="PTHR10949:SF31">
    <property type="entry name" value="LIPOYL SYNTHASE 1, CHLOROPLASTIC"/>
    <property type="match status" value="1"/>
</dbReference>
<dbReference type="Pfam" id="PF04055">
    <property type="entry name" value="Radical_SAM"/>
    <property type="match status" value="1"/>
</dbReference>
<dbReference type="PIRSF" id="PIRSF005963">
    <property type="entry name" value="Lipoyl_synth"/>
    <property type="match status" value="1"/>
</dbReference>
<dbReference type="SFLD" id="SFLDF00271">
    <property type="entry name" value="lipoyl_synthase"/>
    <property type="match status" value="1"/>
</dbReference>
<dbReference type="SFLD" id="SFLDG01058">
    <property type="entry name" value="lipoyl_synthase_like"/>
    <property type="match status" value="1"/>
</dbReference>
<dbReference type="SMART" id="SM00729">
    <property type="entry name" value="Elp3"/>
    <property type="match status" value="1"/>
</dbReference>
<dbReference type="SUPFAM" id="SSF102114">
    <property type="entry name" value="Radical SAM enzymes"/>
    <property type="match status" value="1"/>
</dbReference>
<dbReference type="PROSITE" id="PS51918">
    <property type="entry name" value="RADICAL_SAM"/>
    <property type="match status" value="1"/>
</dbReference>
<gene>
    <name evidence="1" type="primary">LIP1P-2</name>
</gene>
<organism>
    <name type="scientific">Zea mays</name>
    <name type="common">Maize</name>
    <dbReference type="NCBI Taxonomy" id="4577"/>
    <lineage>
        <taxon>Eukaryota</taxon>
        <taxon>Viridiplantae</taxon>
        <taxon>Streptophyta</taxon>
        <taxon>Embryophyta</taxon>
        <taxon>Tracheophyta</taxon>
        <taxon>Spermatophyta</taxon>
        <taxon>Magnoliopsida</taxon>
        <taxon>Liliopsida</taxon>
        <taxon>Poales</taxon>
        <taxon>Poaceae</taxon>
        <taxon>PACMAD clade</taxon>
        <taxon>Panicoideae</taxon>
        <taxon>Andropogonodae</taxon>
        <taxon>Andropogoneae</taxon>
        <taxon>Tripsacinae</taxon>
        <taxon>Zea</taxon>
    </lineage>
</organism>